<feature type="initiator methionine" description="Removed" evidence="1">
    <location>
        <position position="1"/>
    </location>
</feature>
<feature type="chain" id="PRO_0000228456" description="Formamidopyrimidine-DNA glycosylase">
    <location>
        <begin position="2"/>
        <end position="269"/>
    </location>
</feature>
<feature type="zinc finger region" description="FPG-type" evidence="2">
    <location>
        <begin position="235"/>
        <end position="269"/>
    </location>
</feature>
<feature type="active site" description="Schiff-base intermediate with DNA" evidence="2">
    <location>
        <position position="2"/>
    </location>
</feature>
<feature type="active site" description="Proton donor" evidence="2">
    <location>
        <position position="3"/>
    </location>
</feature>
<feature type="active site" description="Proton donor; for beta-elimination activity" evidence="2">
    <location>
        <position position="57"/>
    </location>
</feature>
<feature type="active site" description="Proton donor; for delta-elimination activity" evidence="2">
    <location>
        <position position="259"/>
    </location>
</feature>
<feature type="binding site" evidence="2">
    <location>
        <position position="90"/>
    </location>
    <ligand>
        <name>DNA</name>
        <dbReference type="ChEBI" id="CHEBI:16991"/>
    </ligand>
</feature>
<feature type="binding site" evidence="2">
    <location>
        <position position="109"/>
    </location>
    <ligand>
        <name>DNA</name>
        <dbReference type="ChEBI" id="CHEBI:16991"/>
    </ligand>
</feature>
<feature type="binding site" evidence="2">
    <location>
        <position position="150"/>
    </location>
    <ligand>
        <name>DNA</name>
        <dbReference type="ChEBI" id="CHEBI:16991"/>
    </ligand>
</feature>
<sequence length="269" mass="29924">MPELPEVEVSRMGITPHMVGQTVTKIIVRNPKLRWPIPEEIQQIEGQVIRKVTRRAKYLLLHTDVGYAIVHLGMSGSLRILPASIPPEKHDHVDLVLSSGEVLRYNDPRRFGAWLWGLPDLDHKVLSQLGPEPLSNDFTAEYLQERAKGKRTAIKQFIMDNKVVVGVGNIYANESLFSAGIHPKRAAGEISPEKIALFVDEIKSVLAFAIEQGGTTLKDFKNADGKPGYFAQELQVYGKGGKPCPRCDNPLSEMKIGQRASVFCSECQK</sequence>
<reference key="1">
    <citation type="journal article" date="2005" name="Science">
        <title>Life at depth: Photobacterium profundum genome sequence and expression analysis.</title>
        <authorList>
            <person name="Vezzi A."/>
            <person name="Campanaro S."/>
            <person name="D'Angelo M."/>
            <person name="Simonato F."/>
            <person name="Vitulo N."/>
            <person name="Lauro F.M."/>
            <person name="Cestaro A."/>
            <person name="Malacrida G."/>
            <person name="Simionati B."/>
            <person name="Cannata N."/>
            <person name="Romualdi C."/>
            <person name="Bartlett D.H."/>
            <person name="Valle G."/>
        </authorList>
    </citation>
    <scope>NUCLEOTIDE SEQUENCE [LARGE SCALE GENOMIC DNA]</scope>
    <source>
        <strain>ATCC BAA-1253 / SS9</strain>
    </source>
</reference>
<evidence type="ECO:0000250" key="1"/>
<evidence type="ECO:0000255" key="2">
    <source>
        <dbReference type="HAMAP-Rule" id="MF_00103"/>
    </source>
</evidence>
<keyword id="KW-0227">DNA damage</keyword>
<keyword id="KW-0234">DNA repair</keyword>
<keyword id="KW-0238">DNA-binding</keyword>
<keyword id="KW-0326">Glycosidase</keyword>
<keyword id="KW-0378">Hydrolase</keyword>
<keyword id="KW-0456">Lyase</keyword>
<keyword id="KW-0479">Metal-binding</keyword>
<keyword id="KW-0511">Multifunctional enzyme</keyword>
<keyword id="KW-1185">Reference proteome</keyword>
<keyword id="KW-0862">Zinc</keyword>
<keyword id="KW-0863">Zinc-finger</keyword>
<dbReference type="EC" id="3.2.2.23" evidence="2"/>
<dbReference type="EC" id="4.2.99.18" evidence="2"/>
<dbReference type="EMBL" id="CR378663">
    <property type="protein sequence ID" value="CAG18645.1"/>
    <property type="molecule type" value="Genomic_DNA"/>
</dbReference>
<dbReference type="RefSeq" id="WP_011217021.1">
    <property type="nucleotide sequence ID" value="NC_006370.1"/>
</dbReference>
<dbReference type="SMR" id="Q6LVN0"/>
<dbReference type="STRING" id="298386.PBPRA0206"/>
<dbReference type="KEGG" id="ppr:PBPRA0206"/>
<dbReference type="eggNOG" id="COG0266">
    <property type="taxonomic scope" value="Bacteria"/>
</dbReference>
<dbReference type="HOGENOM" id="CLU_038423_1_1_6"/>
<dbReference type="Proteomes" id="UP000000593">
    <property type="component" value="Chromosome 1"/>
</dbReference>
<dbReference type="GO" id="GO:0034039">
    <property type="term" value="F:8-oxo-7,8-dihydroguanine DNA N-glycosylase activity"/>
    <property type="evidence" value="ECO:0007669"/>
    <property type="project" value="TreeGrafter"/>
</dbReference>
<dbReference type="GO" id="GO:0140078">
    <property type="term" value="F:class I DNA-(apurinic or apyrimidinic site) endonuclease activity"/>
    <property type="evidence" value="ECO:0007669"/>
    <property type="project" value="UniProtKB-EC"/>
</dbReference>
<dbReference type="GO" id="GO:0003684">
    <property type="term" value="F:damaged DNA binding"/>
    <property type="evidence" value="ECO:0007669"/>
    <property type="project" value="InterPro"/>
</dbReference>
<dbReference type="GO" id="GO:0008270">
    <property type="term" value="F:zinc ion binding"/>
    <property type="evidence" value="ECO:0007669"/>
    <property type="project" value="UniProtKB-UniRule"/>
</dbReference>
<dbReference type="GO" id="GO:0006284">
    <property type="term" value="P:base-excision repair"/>
    <property type="evidence" value="ECO:0007669"/>
    <property type="project" value="InterPro"/>
</dbReference>
<dbReference type="CDD" id="cd08966">
    <property type="entry name" value="EcFpg-like_N"/>
    <property type="match status" value="1"/>
</dbReference>
<dbReference type="FunFam" id="1.10.8.50:FF:000003">
    <property type="entry name" value="Formamidopyrimidine-DNA glycosylase"/>
    <property type="match status" value="1"/>
</dbReference>
<dbReference type="FunFam" id="3.20.190.10:FF:000001">
    <property type="entry name" value="Formamidopyrimidine-DNA glycosylase"/>
    <property type="match status" value="1"/>
</dbReference>
<dbReference type="Gene3D" id="1.10.8.50">
    <property type="match status" value="1"/>
</dbReference>
<dbReference type="Gene3D" id="3.20.190.10">
    <property type="entry name" value="MutM-like, N-terminal"/>
    <property type="match status" value="1"/>
</dbReference>
<dbReference type="HAMAP" id="MF_00103">
    <property type="entry name" value="Fapy_DNA_glycosyl"/>
    <property type="match status" value="1"/>
</dbReference>
<dbReference type="InterPro" id="IPR015886">
    <property type="entry name" value="DNA_glyclase/AP_lyase_DNA-bd"/>
</dbReference>
<dbReference type="InterPro" id="IPR020629">
    <property type="entry name" value="Formamido-pyr_DNA_Glyclase"/>
</dbReference>
<dbReference type="InterPro" id="IPR012319">
    <property type="entry name" value="FPG_cat"/>
</dbReference>
<dbReference type="InterPro" id="IPR035937">
    <property type="entry name" value="MutM-like_N-ter"/>
</dbReference>
<dbReference type="InterPro" id="IPR010979">
    <property type="entry name" value="Ribosomal_uS13-like_H2TH"/>
</dbReference>
<dbReference type="InterPro" id="IPR000214">
    <property type="entry name" value="Znf_DNA_glyclase/AP_lyase"/>
</dbReference>
<dbReference type="InterPro" id="IPR010663">
    <property type="entry name" value="Znf_FPG/IleRS"/>
</dbReference>
<dbReference type="NCBIfam" id="TIGR00577">
    <property type="entry name" value="fpg"/>
    <property type="match status" value="1"/>
</dbReference>
<dbReference type="NCBIfam" id="NF002211">
    <property type="entry name" value="PRK01103.1"/>
    <property type="match status" value="1"/>
</dbReference>
<dbReference type="PANTHER" id="PTHR22993">
    <property type="entry name" value="FORMAMIDOPYRIMIDINE-DNA GLYCOSYLASE"/>
    <property type="match status" value="1"/>
</dbReference>
<dbReference type="PANTHER" id="PTHR22993:SF9">
    <property type="entry name" value="FORMAMIDOPYRIMIDINE-DNA GLYCOSYLASE"/>
    <property type="match status" value="1"/>
</dbReference>
<dbReference type="Pfam" id="PF01149">
    <property type="entry name" value="Fapy_DNA_glyco"/>
    <property type="match status" value="1"/>
</dbReference>
<dbReference type="Pfam" id="PF06831">
    <property type="entry name" value="H2TH"/>
    <property type="match status" value="1"/>
</dbReference>
<dbReference type="Pfam" id="PF06827">
    <property type="entry name" value="zf-FPG_IleRS"/>
    <property type="match status" value="1"/>
</dbReference>
<dbReference type="SMART" id="SM00898">
    <property type="entry name" value="Fapy_DNA_glyco"/>
    <property type="match status" value="1"/>
</dbReference>
<dbReference type="SMART" id="SM01232">
    <property type="entry name" value="H2TH"/>
    <property type="match status" value="1"/>
</dbReference>
<dbReference type="SUPFAM" id="SSF57716">
    <property type="entry name" value="Glucocorticoid receptor-like (DNA-binding domain)"/>
    <property type="match status" value="1"/>
</dbReference>
<dbReference type="SUPFAM" id="SSF81624">
    <property type="entry name" value="N-terminal domain of MutM-like DNA repair proteins"/>
    <property type="match status" value="1"/>
</dbReference>
<dbReference type="SUPFAM" id="SSF46946">
    <property type="entry name" value="S13-like H2TH domain"/>
    <property type="match status" value="1"/>
</dbReference>
<dbReference type="PROSITE" id="PS51068">
    <property type="entry name" value="FPG_CAT"/>
    <property type="match status" value="1"/>
</dbReference>
<dbReference type="PROSITE" id="PS51066">
    <property type="entry name" value="ZF_FPG_2"/>
    <property type="match status" value="1"/>
</dbReference>
<organism>
    <name type="scientific">Photobacterium profundum (strain SS9)</name>
    <dbReference type="NCBI Taxonomy" id="298386"/>
    <lineage>
        <taxon>Bacteria</taxon>
        <taxon>Pseudomonadati</taxon>
        <taxon>Pseudomonadota</taxon>
        <taxon>Gammaproteobacteria</taxon>
        <taxon>Vibrionales</taxon>
        <taxon>Vibrionaceae</taxon>
        <taxon>Photobacterium</taxon>
    </lineage>
</organism>
<name>FPG_PHOPR</name>
<protein>
    <recommendedName>
        <fullName evidence="2">Formamidopyrimidine-DNA glycosylase</fullName>
        <shortName evidence="2">Fapy-DNA glycosylase</shortName>
        <ecNumber evidence="2">3.2.2.23</ecNumber>
    </recommendedName>
    <alternativeName>
        <fullName evidence="2">DNA-(apurinic or apyrimidinic site) lyase MutM</fullName>
        <shortName evidence="2">AP lyase MutM</shortName>
        <ecNumber evidence="2">4.2.99.18</ecNumber>
    </alternativeName>
</protein>
<accession>Q6LVN0</accession>
<gene>
    <name evidence="2" type="primary">mutM</name>
    <name evidence="2" type="synonym">fpg</name>
    <name type="ordered locus">PBPRA0206</name>
</gene>
<proteinExistence type="inferred from homology"/>
<comment type="function">
    <text evidence="2">Involved in base excision repair of DNA damaged by oxidation or by mutagenic agents. Acts as a DNA glycosylase that recognizes and removes damaged bases. Has a preference for oxidized purines, such as 7,8-dihydro-8-oxoguanine (8-oxoG). Has AP (apurinic/apyrimidinic) lyase activity and introduces nicks in the DNA strand. Cleaves the DNA backbone by beta-delta elimination to generate a single-strand break at the site of the removed base with both 3'- and 5'-phosphates.</text>
</comment>
<comment type="catalytic activity">
    <reaction evidence="2">
        <text>Hydrolysis of DNA containing ring-opened 7-methylguanine residues, releasing 2,6-diamino-4-hydroxy-5-(N-methyl)formamidopyrimidine.</text>
        <dbReference type="EC" id="3.2.2.23"/>
    </reaction>
</comment>
<comment type="catalytic activity">
    <reaction evidence="2">
        <text>2'-deoxyribonucleotide-(2'-deoxyribose 5'-phosphate)-2'-deoxyribonucleotide-DNA = a 3'-end 2'-deoxyribonucleotide-(2,3-dehydro-2,3-deoxyribose 5'-phosphate)-DNA + a 5'-end 5'-phospho-2'-deoxyribonucleoside-DNA + H(+)</text>
        <dbReference type="Rhea" id="RHEA:66592"/>
        <dbReference type="Rhea" id="RHEA-COMP:13180"/>
        <dbReference type="Rhea" id="RHEA-COMP:16897"/>
        <dbReference type="Rhea" id="RHEA-COMP:17067"/>
        <dbReference type="ChEBI" id="CHEBI:15378"/>
        <dbReference type="ChEBI" id="CHEBI:136412"/>
        <dbReference type="ChEBI" id="CHEBI:157695"/>
        <dbReference type="ChEBI" id="CHEBI:167181"/>
        <dbReference type="EC" id="4.2.99.18"/>
    </reaction>
</comment>
<comment type="cofactor">
    <cofactor evidence="2">
        <name>Zn(2+)</name>
        <dbReference type="ChEBI" id="CHEBI:29105"/>
    </cofactor>
    <text evidence="2">Binds 1 zinc ion per subunit.</text>
</comment>
<comment type="subunit">
    <text evidence="2">Monomer.</text>
</comment>
<comment type="similarity">
    <text evidence="2">Belongs to the FPG family.</text>
</comment>